<evidence type="ECO:0000255" key="1">
    <source>
        <dbReference type="HAMAP-Rule" id="MF_00197"/>
    </source>
</evidence>
<reference key="1">
    <citation type="journal article" date="2007" name="PLoS Genet.">
        <title>Patterns and implications of gene gain and loss in the evolution of Prochlorococcus.</title>
        <authorList>
            <person name="Kettler G.C."/>
            <person name="Martiny A.C."/>
            <person name="Huang K."/>
            <person name="Zucker J."/>
            <person name="Coleman M.L."/>
            <person name="Rodrigue S."/>
            <person name="Chen F."/>
            <person name="Lapidus A."/>
            <person name="Ferriera S."/>
            <person name="Johnson J."/>
            <person name="Steglich C."/>
            <person name="Church G.M."/>
            <person name="Richardson P."/>
            <person name="Chisholm S.W."/>
        </authorList>
    </citation>
    <scope>NUCLEOTIDE SEQUENCE [LARGE SCALE GENOMIC DNA]</scope>
    <source>
        <strain>NATL2A</strain>
    </source>
</reference>
<proteinExistence type="inferred from homology"/>
<gene>
    <name evidence="1" type="primary">dapF</name>
    <name type="ordered locus">PMN2A_0322</name>
</gene>
<keyword id="KW-0028">Amino-acid biosynthesis</keyword>
<keyword id="KW-0963">Cytoplasm</keyword>
<keyword id="KW-0413">Isomerase</keyword>
<keyword id="KW-0457">Lysine biosynthesis</keyword>
<keyword id="KW-1185">Reference proteome</keyword>
<name>DAPF_PROMT</name>
<accession>Q46L14</accession>
<sequence>MKNNFSKYQGLGNDFIIFDARSNNLDHLFSKNKDNFIEHLCNRNFGIGADGIILILESNNKCFVRMKIYNSDGSEPEMCGNGIRCLIAFLNDNNEINELSEIPIETKAGLILTYIDGNENIKVNMGEPILSPLDIPTKLLMNSLKVPNGVITLKDQILNVYAASMGNPHMIVFVNDIEGIPFQEWGSFLEKHNTFPNDTNVHFVEIIDKSNIKVKVWERGCGPTLACGTGACACLVVTSKLGKTLNNANVYLPGGKLEVEWPNQSGPVFMQGPALKVFSGEIDI</sequence>
<dbReference type="EC" id="5.1.1.7" evidence="1"/>
<dbReference type="EMBL" id="CP000095">
    <property type="protein sequence ID" value="AAZ57814.1"/>
    <property type="molecule type" value="Genomic_DNA"/>
</dbReference>
<dbReference type="RefSeq" id="WP_011293856.1">
    <property type="nucleotide sequence ID" value="NC_007335.2"/>
</dbReference>
<dbReference type="SMR" id="Q46L14"/>
<dbReference type="STRING" id="59920.PMN2A_0322"/>
<dbReference type="KEGG" id="pmn:PMN2A_0322"/>
<dbReference type="HOGENOM" id="CLU_053306_3_0_3"/>
<dbReference type="OrthoDB" id="9805408at2"/>
<dbReference type="PhylomeDB" id="Q46L14"/>
<dbReference type="UniPathway" id="UPA00034">
    <property type="reaction ID" value="UER00025"/>
</dbReference>
<dbReference type="Proteomes" id="UP000002535">
    <property type="component" value="Chromosome"/>
</dbReference>
<dbReference type="GO" id="GO:0005829">
    <property type="term" value="C:cytosol"/>
    <property type="evidence" value="ECO:0007669"/>
    <property type="project" value="TreeGrafter"/>
</dbReference>
<dbReference type="GO" id="GO:0008837">
    <property type="term" value="F:diaminopimelate epimerase activity"/>
    <property type="evidence" value="ECO:0007669"/>
    <property type="project" value="UniProtKB-UniRule"/>
</dbReference>
<dbReference type="GO" id="GO:0009089">
    <property type="term" value="P:lysine biosynthetic process via diaminopimelate"/>
    <property type="evidence" value="ECO:0007669"/>
    <property type="project" value="UniProtKB-UniRule"/>
</dbReference>
<dbReference type="Gene3D" id="3.10.310.10">
    <property type="entry name" value="Diaminopimelate Epimerase, Chain A, domain 1"/>
    <property type="match status" value="2"/>
</dbReference>
<dbReference type="HAMAP" id="MF_00197">
    <property type="entry name" value="DAP_epimerase"/>
    <property type="match status" value="1"/>
</dbReference>
<dbReference type="InterPro" id="IPR018510">
    <property type="entry name" value="DAP_epimerase_AS"/>
</dbReference>
<dbReference type="InterPro" id="IPR001653">
    <property type="entry name" value="DAP_epimerase_DapF"/>
</dbReference>
<dbReference type="NCBIfam" id="TIGR00652">
    <property type="entry name" value="DapF"/>
    <property type="match status" value="1"/>
</dbReference>
<dbReference type="PANTHER" id="PTHR31689:SF0">
    <property type="entry name" value="DIAMINOPIMELATE EPIMERASE"/>
    <property type="match status" value="1"/>
</dbReference>
<dbReference type="PANTHER" id="PTHR31689">
    <property type="entry name" value="DIAMINOPIMELATE EPIMERASE, CHLOROPLASTIC"/>
    <property type="match status" value="1"/>
</dbReference>
<dbReference type="Pfam" id="PF01678">
    <property type="entry name" value="DAP_epimerase"/>
    <property type="match status" value="2"/>
</dbReference>
<dbReference type="SUPFAM" id="SSF54506">
    <property type="entry name" value="Diaminopimelate epimerase-like"/>
    <property type="match status" value="2"/>
</dbReference>
<dbReference type="PROSITE" id="PS01326">
    <property type="entry name" value="DAP_EPIMERASE"/>
    <property type="match status" value="1"/>
</dbReference>
<protein>
    <recommendedName>
        <fullName evidence="1">Diaminopimelate epimerase</fullName>
        <shortName evidence="1">DAP epimerase</shortName>
        <ecNumber evidence="1">5.1.1.7</ecNumber>
    </recommendedName>
    <alternativeName>
        <fullName evidence="1">PLP-independent amino acid racemase</fullName>
    </alternativeName>
</protein>
<comment type="function">
    <text evidence="1">Catalyzes the stereoinversion of LL-2,6-diaminopimelate (L,L-DAP) to meso-diaminopimelate (meso-DAP), a precursor of L-lysine and an essential component of the bacterial peptidoglycan.</text>
</comment>
<comment type="catalytic activity">
    <reaction evidence="1">
        <text>(2S,6S)-2,6-diaminopimelate = meso-2,6-diaminopimelate</text>
        <dbReference type="Rhea" id="RHEA:15393"/>
        <dbReference type="ChEBI" id="CHEBI:57609"/>
        <dbReference type="ChEBI" id="CHEBI:57791"/>
        <dbReference type="EC" id="5.1.1.7"/>
    </reaction>
</comment>
<comment type="pathway">
    <text evidence="1">Amino-acid biosynthesis; L-lysine biosynthesis via DAP pathway; DL-2,6-diaminopimelate from LL-2,6-diaminopimelate: step 1/1.</text>
</comment>
<comment type="subunit">
    <text evidence="1">Homodimer.</text>
</comment>
<comment type="subcellular location">
    <subcellularLocation>
        <location evidence="1">Cytoplasm</location>
    </subcellularLocation>
</comment>
<comment type="similarity">
    <text evidence="1">Belongs to the diaminopimelate epimerase family.</text>
</comment>
<organism>
    <name type="scientific">Prochlorococcus marinus (strain NATL2A)</name>
    <dbReference type="NCBI Taxonomy" id="59920"/>
    <lineage>
        <taxon>Bacteria</taxon>
        <taxon>Bacillati</taxon>
        <taxon>Cyanobacteriota</taxon>
        <taxon>Cyanophyceae</taxon>
        <taxon>Synechococcales</taxon>
        <taxon>Prochlorococcaceae</taxon>
        <taxon>Prochlorococcus</taxon>
    </lineage>
</organism>
<feature type="chain" id="PRO_1000011927" description="Diaminopimelate epimerase">
    <location>
        <begin position="1"/>
        <end position="284"/>
    </location>
</feature>
<feature type="active site" description="Proton donor" evidence="1">
    <location>
        <position position="79"/>
    </location>
</feature>
<feature type="active site" description="Proton acceptor" evidence="1">
    <location>
        <position position="227"/>
    </location>
</feature>
<feature type="binding site" evidence="1">
    <location>
        <position position="13"/>
    </location>
    <ligand>
        <name>substrate</name>
    </ligand>
</feature>
<feature type="binding site" evidence="1">
    <location>
        <position position="70"/>
    </location>
    <ligand>
        <name>substrate</name>
    </ligand>
</feature>
<feature type="binding site" evidence="1">
    <location>
        <begin position="80"/>
        <end position="81"/>
    </location>
    <ligand>
        <name>substrate</name>
    </ligand>
</feature>
<feature type="binding site" evidence="1">
    <location>
        <position position="167"/>
    </location>
    <ligand>
        <name>substrate</name>
    </ligand>
</feature>
<feature type="binding site" evidence="1">
    <location>
        <position position="200"/>
    </location>
    <ligand>
        <name>substrate</name>
    </ligand>
</feature>
<feature type="binding site" evidence="1">
    <location>
        <begin position="218"/>
        <end position="219"/>
    </location>
    <ligand>
        <name>substrate</name>
    </ligand>
</feature>
<feature type="binding site" evidence="1">
    <location>
        <begin position="228"/>
        <end position="229"/>
    </location>
    <ligand>
        <name>substrate</name>
    </ligand>
</feature>
<feature type="site" description="Could be important to modulate the pK values of the two catalytic cysteine residues" evidence="1">
    <location>
        <position position="169"/>
    </location>
</feature>
<feature type="site" description="Could be important to modulate the pK values of the two catalytic cysteine residues" evidence="1">
    <location>
        <position position="218"/>
    </location>
</feature>